<dbReference type="EMBL" id="AE016853">
    <property type="protein sequence ID" value="AAO58769.1"/>
    <property type="molecule type" value="Genomic_DNA"/>
</dbReference>
<dbReference type="RefSeq" id="NP_795074.1">
    <property type="nucleotide sequence ID" value="NC_004578.1"/>
</dbReference>
<dbReference type="RefSeq" id="WP_002555777.1">
    <property type="nucleotide sequence ID" value="NC_004578.1"/>
</dbReference>
<dbReference type="SMR" id="Q87UF5"/>
<dbReference type="STRING" id="223283.PSPTO_5343"/>
<dbReference type="KEGG" id="pst:PSPTO_5343"/>
<dbReference type="PATRIC" id="fig|223283.9.peg.5471"/>
<dbReference type="eggNOG" id="COG2924">
    <property type="taxonomic scope" value="Bacteria"/>
</dbReference>
<dbReference type="HOGENOM" id="CLU_170994_0_0_6"/>
<dbReference type="OrthoDB" id="9804318at2"/>
<dbReference type="PhylomeDB" id="Q87UF5"/>
<dbReference type="Proteomes" id="UP000002515">
    <property type="component" value="Chromosome"/>
</dbReference>
<dbReference type="GO" id="GO:0005829">
    <property type="term" value="C:cytosol"/>
    <property type="evidence" value="ECO:0007669"/>
    <property type="project" value="TreeGrafter"/>
</dbReference>
<dbReference type="GO" id="GO:0005506">
    <property type="term" value="F:iron ion binding"/>
    <property type="evidence" value="ECO:0007669"/>
    <property type="project" value="UniProtKB-UniRule"/>
</dbReference>
<dbReference type="GO" id="GO:0034599">
    <property type="term" value="P:cellular response to oxidative stress"/>
    <property type="evidence" value="ECO:0007669"/>
    <property type="project" value="TreeGrafter"/>
</dbReference>
<dbReference type="FunFam" id="1.10.3880.10:FF:000001">
    <property type="entry name" value="Probable Fe(2+)-trafficking protein"/>
    <property type="match status" value="1"/>
</dbReference>
<dbReference type="Gene3D" id="1.10.3880.10">
    <property type="entry name" value="Fe(II) trafficking protein YggX"/>
    <property type="match status" value="1"/>
</dbReference>
<dbReference type="HAMAP" id="MF_00686">
    <property type="entry name" value="Fe_traffic_YggX"/>
    <property type="match status" value="1"/>
</dbReference>
<dbReference type="InterPro" id="IPR007457">
    <property type="entry name" value="Fe_traffick_prot_YggX"/>
</dbReference>
<dbReference type="InterPro" id="IPR036766">
    <property type="entry name" value="Fe_traffick_prot_YggX_sf"/>
</dbReference>
<dbReference type="NCBIfam" id="NF003817">
    <property type="entry name" value="PRK05408.1"/>
    <property type="match status" value="1"/>
</dbReference>
<dbReference type="PANTHER" id="PTHR36965">
    <property type="entry name" value="FE(2+)-TRAFFICKING PROTEIN-RELATED"/>
    <property type="match status" value="1"/>
</dbReference>
<dbReference type="PANTHER" id="PTHR36965:SF1">
    <property type="entry name" value="FE(2+)-TRAFFICKING PROTEIN-RELATED"/>
    <property type="match status" value="1"/>
</dbReference>
<dbReference type="Pfam" id="PF04362">
    <property type="entry name" value="Iron_traffic"/>
    <property type="match status" value="1"/>
</dbReference>
<dbReference type="PIRSF" id="PIRSF029827">
    <property type="entry name" value="Fe_traffic_YggX"/>
    <property type="match status" value="1"/>
</dbReference>
<dbReference type="SUPFAM" id="SSF111148">
    <property type="entry name" value="YggX-like"/>
    <property type="match status" value="1"/>
</dbReference>
<gene>
    <name type="ordered locus">PSPTO_5343</name>
</gene>
<name>FETP_PSESM</name>
<protein>
    <recommendedName>
        <fullName evidence="1">Probable Fe(2+)-trafficking protein</fullName>
    </recommendedName>
</protein>
<accession>Q87UF5</accession>
<proteinExistence type="inferred from homology"/>
<feature type="chain" id="PRO_0000214500" description="Probable Fe(2+)-trafficking protein">
    <location>
        <begin position="1"/>
        <end position="90"/>
    </location>
</feature>
<keyword id="KW-0408">Iron</keyword>
<keyword id="KW-1185">Reference proteome</keyword>
<evidence type="ECO:0000255" key="1">
    <source>
        <dbReference type="HAMAP-Rule" id="MF_00686"/>
    </source>
</evidence>
<reference key="1">
    <citation type="journal article" date="2003" name="Proc. Natl. Acad. Sci. U.S.A.">
        <title>The complete genome sequence of the Arabidopsis and tomato pathogen Pseudomonas syringae pv. tomato DC3000.</title>
        <authorList>
            <person name="Buell C.R."/>
            <person name="Joardar V."/>
            <person name="Lindeberg M."/>
            <person name="Selengut J."/>
            <person name="Paulsen I.T."/>
            <person name="Gwinn M.L."/>
            <person name="Dodson R.J."/>
            <person name="DeBoy R.T."/>
            <person name="Durkin A.S."/>
            <person name="Kolonay J.F."/>
            <person name="Madupu R."/>
            <person name="Daugherty S.C."/>
            <person name="Brinkac L.M."/>
            <person name="Beanan M.J."/>
            <person name="Haft D.H."/>
            <person name="Nelson W.C."/>
            <person name="Davidsen T.M."/>
            <person name="Zafar N."/>
            <person name="Zhou L."/>
            <person name="Liu J."/>
            <person name="Yuan Q."/>
            <person name="Khouri H.M."/>
            <person name="Fedorova N.B."/>
            <person name="Tran B."/>
            <person name="Russell D."/>
            <person name="Berry K.J."/>
            <person name="Utterback T.R."/>
            <person name="Van Aken S.E."/>
            <person name="Feldblyum T.V."/>
            <person name="D'Ascenzo M."/>
            <person name="Deng W.-L."/>
            <person name="Ramos A.R."/>
            <person name="Alfano J.R."/>
            <person name="Cartinhour S."/>
            <person name="Chatterjee A.K."/>
            <person name="Delaney T.P."/>
            <person name="Lazarowitz S.G."/>
            <person name="Martin G.B."/>
            <person name="Schneider D.J."/>
            <person name="Tang X."/>
            <person name="Bender C.L."/>
            <person name="White O."/>
            <person name="Fraser C.M."/>
            <person name="Collmer A."/>
        </authorList>
    </citation>
    <scope>NUCLEOTIDE SEQUENCE [LARGE SCALE GENOMIC DNA]</scope>
    <source>
        <strain>ATCC BAA-871 / DC3000</strain>
    </source>
</reference>
<comment type="function">
    <text evidence="1">Could be a mediator in iron transactions between iron acquisition and iron-requiring processes, such as synthesis and/or repair of Fe-S clusters in biosynthetic enzymes.</text>
</comment>
<comment type="similarity">
    <text evidence="1">Belongs to the Fe(2+)-trafficking protein family.</text>
</comment>
<sequence>MTRTVMCRKYKEELPGLERAPYPGAKGEDIFNHVSQKAWADWQKHQTLLINERRLNMMNAEDRKFLQTEMDKFLSGEEYAQAEGYVPPEK</sequence>
<organism>
    <name type="scientific">Pseudomonas syringae pv. tomato (strain ATCC BAA-871 / DC3000)</name>
    <dbReference type="NCBI Taxonomy" id="223283"/>
    <lineage>
        <taxon>Bacteria</taxon>
        <taxon>Pseudomonadati</taxon>
        <taxon>Pseudomonadota</taxon>
        <taxon>Gammaproteobacteria</taxon>
        <taxon>Pseudomonadales</taxon>
        <taxon>Pseudomonadaceae</taxon>
        <taxon>Pseudomonas</taxon>
    </lineage>
</organism>